<evidence type="ECO:0000255" key="1">
    <source>
        <dbReference type="PROSITE-ProRule" id="PRU00042"/>
    </source>
</evidence>
<evidence type="ECO:0000255" key="2">
    <source>
        <dbReference type="PROSITE-ProRule" id="PRU00119"/>
    </source>
</evidence>
<evidence type="ECO:0000305" key="3"/>
<evidence type="ECO:0007744" key="4">
    <source>
    </source>
</evidence>
<accession>Q86TJ5</accession>
<accession>Q8NAT3</accession>
<accession>Q9BWN3</accession>
<gene>
    <name type="primary">ZNF554</name>
</gene>
<comment type="function">
    <text>May be involved in transcriptional regulation.</text>
</comment>
<comment type="interaction">
    <interactant intactId="EBI-19137100">
        <id>Q86TJ5</id>
    </interactant>
    <interactant intactId="EBI-1055079">
        <id>O15160</id>
        <label>POLR1C</label>
    </interactant>
    <organismsDiffer>false</organismsDiffer>
    <experiments>3</experiments>
</comment>
<comment type="interaction">
    <interactant intactId="EBI-19137100">
        <id>Q86TJ5</id>
    </interactant>
    <interactant intactId="EBI-372432">
        <id>Q8WW01</id>
        <label>TSEN15</label>
    </interactant>
    <organismsDiffer>false</organismsDiffer>
    <experiments>3</experiments>
</comment>
<comment type="subcellular location">
    <subcellularLocation>
        <location evidence="3">Nucleus</location>
    </subcellularLocation>
</comment>
<comment type="similarity">
    <text evidence="3">Belongs to the krueppel C2H2-type zinc-finger protein family.</text>
</comment>
<comment type="sequence caution" evidence="3">
    <conflict type="erroneous initiation">
        <sequence resource="EMBL-CDS" id="AAH00113"/>
    </conflict>
</comment>
<organism>
    <name type="scientific">Homo sapiens</name>
    <name type="common">Human</name>
    <dbReference type="NCBI Taxonomy" id="9606"/>
    <lineage>
        <taxon>Eukaryota</taxon>
        <taxon>Metazoa</taxon>
        <taxon>Chordata</taxon>
        <taxon>Craniata</taxon>
        <taxon>Vertebrata</taxon>
        <taxon>Euteleostomi</taxon>
        <taxon>Mammalia</taxon>
        <taxon>Eutheria</taxon>
        <taxon>Euarchontoglires</taxon>
        <taxon>Primates</taxon>
        <taxon>Haplorrhini</taxon>
        <taxon>Catarrhini</taxon>
        <taxon>Hominidae</taxon>
        <taxon>Homo</taxon>
    </lineage>
</organism>
<sequence length="538" mass="60582">MVTCAHLGRRARLPAAQPSACPGTCFSQEERMAAGYLPRWSQELVTFEDVSMDFSQEEWELLEPAQKNLYREVMLENYRNVVSLEALKNQCTDVGIKEGPLSPAQTSQVTSLSSWTGYLLFQPVASSHLEQREALWIEEKGTPQASCSDWMTVLRNQDSTYKKVALQEEPASGINMIKLIREDGGWKQLEDSHEDPQGLLSQKASLHVVAVPQEKATAWHGFGENGNLSPALVLSQGSSKGNHLCGSELDITSLASDSVLNHHQLGYADRRPCESNECGNAIRQNSHFIQHGGKMFVYLENGQSLNHGMALTIHNKINTAEKPFECHQCGKVFNRRHSLSEHQRIHTGEKPYECQECGRAFTHSSTLTRHLRTHTGEKPYGCGECGKAFNRISSLTQHQRIHTGEKPYKCEDCGKSFCQSSYLILHKRTHTGEKPYECSECGKAFSDRSSLNQHERTHTGENPYECKQCGRAFSQRSSLVRHERTHTGEKPYRCQECGKAFSQSSSLVTHQKTHSSQKTYKIIDCGKAFYQNRHLIGY</sequence>
<protein>
    <recommendedName>
        <fullName>Zinc finger protein 554</fullName>
    </recommendedName>
</protein>
<proteinExistence type="evidence at protein level"/>
<feature type="chain" id="PRO_0000274875" description="Zinc finger protein 554">
    <location>
        <begin position="1"/>
        <end position="538"/>
    </location>
</feature>
<feature type="domain" description="KRAB" evidence="2">
    <location>
        <begin position="45"/>
        <end position="148"/>
    </location>
</feature>
<feature type="zinc finger region" description="C2H2-type 1; degenerate" evidence="1">
    <location>
        <begin position="271"/>
        <end position="292"/>
    </location>
</feature>
<feature type="zinc finger region" description="C2H2-type 2" evidence="1">
    <location>
        <begin position="324"/>
        <end position="346"/>
    </location>
</feature>
<feature type="zinc finger region" description="C2H2-type 3" evidence="1">
    <location>
        <begin position="352"/>
        <end position="374"/>
    </location>
</feature>
<feature type="zinc finger region" description="C2H2-type 4" evidence="1">
    <location>
        <begin position="380"/>
        <end position="402"/>
    </location>
</feature>
<feature type="zinc finger region" description="C2H2-type 5" evidence="1">
    <location>
        <begin position="408"/>
        <end position="430"/>
    </location>
</feature>
<feature type="zinc finger region" description="C2H2-type 6" evidence="1">
    <location>
        <begin position="436"/>
        <end position="458"/>
    </location>
</feature>
<feature type="zinc finger region" description="C2H2-type 7" evidence="1">
    <location>
        <begin position="464"/>
        <end position="486"/>
    </location>
</feature>
<feature type="zinc finger region" description="C2H2-type 8" evidence="1">
    <location>
        <begin position="492"/>
        <end position="514"/>
    </location>
</feature>
<feature type="cross-link" description="Glycyl lysine isopeptide (Lys-Gly) (interchain with G-Cter in SUMO2)" evidence="4">
    <location>
        <position position="178"/>
    </location>
</feature>
<feature type="sequence variant" id="VAR_052861" description="In dbSNP:rs867168.">
    <original>E</original>
    <variation>G</variation>
    <location>
        <position position="190"/>
    </location>
</feature>
<feature type="sequence variant" id="VAR_052862" description="In dbSNP:rs867169.">
    <original>V</original>
    <variation>I</variation>
    <location>
        <position position="211"/>
    </location>
</feature>
<keyword id="KW-0238">DNA-binding</keyword>
<keyword id="KW-1017">Isopeptide bond</keyword>
<keyword id="KW-0479">Metal-binding</keyword>
<keyword id="KW-0539">Nucleus</keyword>
<keyword id="KW-1267">Proteomics identification</keyword>
<keyword id="KW-1185">Reference proteome</keyword>
<keyword id="KW-0677">Repeat</keyword>
<keyword id="KW-0804">Transcription</keyword>
<keyword id="KW-0805">Transcription regulation</keyword>
<keyword id="KW-0832">Ubl conjugation</keyword>
<keyword id="KW-0862">Zinc</keyword>
<keyword id="KW-0863">Zinc-finger</keyword>
<dbReference type="EMBL" id="AK092136">
    <property type="protein sequence ID" value="BAC03814.1"/>
    <property type="molecule type" value="mRNA"/>
</dbReference>
<dbReference type="EMBL" id="BC000113">
    <property type="protein sequence ID" value="AAH00113.1"/>
    <property type="status" value="ALT_INIT"/>
    <property type="molecule type" value="mRNA"/>
</dbReference>
<dbReference type="EMBL" id="BC047777">
    <property type="protein sequence ID" value="AAH47777.1"/>
    <property type="molecule type" value="mRNA"/>
</dbReference>
<dbReference type="CCDS" id="CCDS42462.1"/>
<dbReference type="RefSeq" id="NP_001096121.1">
    <property type="nucleotide sequence ID" value="NM_001102651.2"/>
</dbReference>
<dbReference type="SMR" id="Q86TJ5"/>
<dbReference type="BioGRID" id="125417">
    <property type="interactions" value="17"/>
</dbReference>
<dbReference type="FunCoup" id="Q86TJ5">
    <property type="interactions" value="566"/>
</dbReference>
<dbReference type="IntAct" id="Q86TJ5">
    <property type="interactions" value="10"/>
</dbReference>
<dbReference type="STRING" id="9606.ENSP00000321132"/>
<dbReference type="iPTMnet" id="Q86TJ5"/>
<dbReference type="PhosphoSitePlus" id="Q86TJ5"/>
<dbReference type="BioMuta" id="ZNF554"/>
<dbReference type="DMDM" id="74759371"/>
<dbReference type="jPOST" id="Q86TJ5"/>
<dbReference type="MassIVE" id="Q86TJ5"/>
<dbReference type="PaxDb" id="9606-ENSP00000321132"/>
<dbReference type="PeptideAtlas" id="Q86TJ5"/>
<dbReference type="ProteomicsDB" id="69708"/>
<dbReference type="Antibodypedia" id="23070">
    <property type="antibodies" value="129 antibodies from 17 providers"/>
</dbReference>
<dbReference type="DNASU" id="115196"/>
<dbReference type="Ensembl" id="ENST00000317243.10">
    <property type="protein sequence ID" value="ENSP00000321132.4"/>
    <property type="gene ID" value="ENSG00000172006.12"/>
</dbReference>
<dbReference type="GeneID" id="115196"/>
<dbReference type="KEGG" id="hsa:115196"/>
<dbReference type="MANE-Select" id="ENST00000317243.10">
    <property type="protein sequence ID" value="ENSP00000321132.4"/>
    <property type="RefSeq nucleotide sequence ID" value="NM_001102651.2"/>
    <property type="RefSeq protein sequence ID" value="NP_001096121.1"/>
</dbReference>
<dbReference type="UCSC" id="uc002lwm.3">
    <property type="organism name" value="human"/>
</dbReference>
<dbReference type="AGR" id="HGNC:26629"/>
<dbReference type="CTD" id="115196"/>
<dbReference type="DisGeNET" id="115196"/>
<dbReference type="GeneCards" id="ZNF554"/>
<dbReference type="HGNC" id="HGNC:26629">
    <property type="gene designation" value="ZNF554"/>
</dbReference>
<dbReference type="HPA" id="ENSG00000172006">
    <property type="expression patterns" value="Low tissue specificity"/>
</dbReference>
<dbReference type="neXtProt" id="NX_Q86TJ5"/>
<dbReference type="PharmGKB" id="PA134915990"/>
<dbReference type="VEuPathDB" id="HostDB:ENSG00000172006"/>
<dbReference type="eggNOG" id="KOG1721">
    <property type="taxonomic scope" value="Eukaryota"/>
</dbReference>
<dbReference type="GeneTree" id="ENSGT00940000163560"/>
<dbReference type="HOGENOM" id="CLU_002678_44_5_1"/>
<dbReference type="InParanoid" id="Q86TJ5"/>
<dbReference type="OMA" id="EKATAWH"/>
<dbReference type="OrthoDB" id="6077919at2759"/>
<dbReference type="PAN-GO" id="Q86TJ5">
    <property type="GO annotations" value="3 GO annotations based on evolutionary models"/>
</dbReference>
<dbReference type="PhylomeDB" id="Q86TJ5"/>
<dbReference type="TreeFam" id="TF337055"/>
<dbReference type="PathwayCommons" id="Q86TJ5"/>
<dbReference type="Reactome" id="R-HSA-212436">
    <property type="pathway name" value="Generic Transcription Pathway"/>
</dbReference>
<dbReference type="SignaLink" id="Q86TJ5"/>
<dbReference type="BioGRID-ORCS" id="115196">
    <property type="hits" value="6 hits in 1168 CRISPR screens"/>
</dbReference>
<dbReference type="GenomeRNAi" id="115196"/>
<dbReference type="Pharos" id="Q86TJ5">
    <property type="development level" value="Tdark"/>
</dbReference>
<dbReference type="PRO" id="PR:Q86TJ5"/>
<dbReference type="Proteomes" id="UP000005640">
    <property type="component" value="Chromosome 19"/>
</dbReference>
<dbReference type="RNAct" id="Q86TJ5">
    <property type="molecule type" value="protein"/>
</dbReference>
<dbReference type="Bgee" id="ENSG00000172006">
    <property type="expression patterns" value="Expressed in buccal mucosa cell and 159 other cell types or tissues"/>
</dbReference>
<dbReference type="ExpressionAtlas" id="Q86TJ5">
    <property type="expression patterns" value="baseline and differential"/>
</dbReference>
<dbReference type="GO" id="GO:0005730">
    <property type="term" value="C:nucleolus"/>
    <property type="evidence" value="ECO:0000314"/>
    <property type="project" value="HPA"/>
</dbReference>
<dbReference type="GO" id="GO:0005654">
    <property type="term" value="C:nucleoplasm"/>
    <property type="evidence" value="ECO:0000314"/>
    <property type="project" value="HPA"/>
</dbReference>
<dbReference type="GO" id="GO:0005634">
    <property type="term" value="C:nucleus"/>
    <property type="evidence" value="ECO:0000318"/>
    <property type="project" value="GO_Central"/>
</dbReference>
<dbReference type="GO" id="GO:0000981">
    <property type="term" value="F:DNA-binding transcription factor activity, RNA polymerase II-specific"/>
    <property type="evidence" value="ECO:0000318"/>
    <property type="project" value="GO_Central"/>
</dbReference>
<dbReference type="GO" id="GO:0000977">
    <property type="term" value="F:RNA polymerase II transcription regulatory region sequence-specific DNA binding"/>
    <property type="evidence" value="ECO:0000318"/>
    <property type="project" value="GO_Central"/>
</dbReference>
<dbReference type="GO" id="GO:0008270">
    <property type="term" value="F:zinc ion binding"/>
    <property type="evidence" value="ECO:0007669"/>
    <property type="project" value="UniProtKB-KW"/>
</dbReference>
<dbReference type="GO" id="GO:0006357">
    <property type="term" value="P:regulation of transcription by RNA polymerase II"/>
    <property type="evidence" value="ECO:0000318"/>
    <property type="project" value="GO_Central"/>
</dbReference>
<dbReference type="CDD" id="cd07765">
    <property type="entry name" value="KRAB_A-box"/>
    <property type="match status" value="1"/>
</dbReference>
<dbReference type="FunFam" id="3.30.160.60:FF:000016">
    <property type="entry name" value="zinc finger protein 37 homolog"/>
    <property type="match status" value="2"/>
</dbReference>
<dbReference type="FunFam" id="3.30.160.60:FF:000212">
    <property type="entry name" value="zinc finger protein 382 isoform X2"/>
    <property type="match status" value="1"/>
</dbReference>
<dbReference type="FunFam" id="3.30.160.60:FF:000384">
    <property type="entry name" value="Zinc finger protein 550"/>
    <property type="match status" value="1"/>
</dbReference>
<dbReference type="FunFam" id="3.30.160.60:FF:000953">
    <property type="entry name" value="Zinc finger protein 691"/>
    <property type="match status" value="1"/>
</dbReference>
<dbReference type="FunFam" id="3.30.160.60:FF:000564">
    <property type="entry name" value="zinc finger protein 699"/>
    <property type="match status" value="1"/>
</dbReference>
<dbReference type="FunFam" id="3.30.160.60:FF:001524">
    <property type="entry name" value="Zinc finger protein 8"/>
    <property type="match status" value="1"/>
</dbReference>
<dbReference type="Gene3D" id="6.10.140.140">
    <property type="match status" value="1"/>
</dbReference>
<dbReference type="Gene3D" id="3.30.160.60">
    <property type="entry name" value="Classic Zinc Finger"/>
    <property type="match status" value="7"/>
</dbReference>
<dbReference type="InterPro" id="IPR001909">
    <property type="entry name" value="KRAB"/>
</dbReference>
<dbReference type="InterPro" id="IPR036051">
    <property type="entry name" value="KRAB_dom_sf"/>
</dbReference>
<dbReference type="InterPro" id="IPR050888">
    <property type="entry name" value="ZnF_C2H2-type_TF"/>
</dbReference>
<dbReference type="InterPro" id="IPR036236">
    <property type="entry name" value="Znf_C2H2_sf"/>
</dbReference>
<dbReference type="InterPro" id="IPR013087">
    <property type="entry name" value="Znf_C2H2_type"/>
</dbReference>
<dbReference type="PANTHER" id="PTHR24406">
    <property type="entry name" value="TRANSCRIPTIONAL REPRESSOR CTCFL-RELATED"/>
    <property type="match status" value="1"/>
</dbReference>
<dbReference type="Pfam" id="PF01352">
    <property type="entry name" value="KRAB"/>
    <property type="match status" value="1"/>
</dbReference>
<dbReference type="Pfam" id="PF00096">
    <property type="entry name" value="zf-C2H2"/>
    <property type="match status" value="5"/>
</dbReference>
<dbReference type="Pfam" id="PF13465">
    <property type="entry name" value="zf-H2C2_2"/>
    <property type="match status" value="1"/>
</dbReference>
<dbReference type="SMART" id="SM00349">
    <property type="entry name" value="KRAB"/>
    <property type="match status" value="1"/>
</dbReference>
<dbReference type="SMART" id="SM00355">
    <property type="entry name" value="ZnF_C2H2"/>
    <property type="match status" value="7"/>
</dbReference>
<dbReference type="SUPFAM" id="SSF57667">
    <property type="entry name" value="beta-beta-alpha zinc fingers"/>
    <property type="match status" value="5"/>
</dbReference>
<dbReference type="SUPFAM" id="SSF109640">
    <property type="entry name" value="KRAB domain (Kruppel-associated box)"/>
    <property type="match status" value="1"/>
</dbReference>
<dbReference type="PROSITE" id="PS50805">
    <property type="entry name" value="KRAB"/>
    <property type="match status" value="1"/>
</dbReference>
<dbReference type="PROSITE" id="PS00028">
    <property type="entry name" value="ZINC_FINGER_C2H2_1"/>
    <property type="match status" value="7"/>
</dbReference>
<dbReference type="PROSITE" id="PS50157">
    <property type="entry name" value="ZINC_FINGER_C2H2_2"/>
    <property type="match status" value="7"/>
</dbReference>
<reference key="1">
    <citation type="journal article" date="2004" name="Nat. Genet.">
        <title>Complete sequencing and characterization of 21,243 full-length human cDNAs.</title>
        <authorList>
            <person name="Ota T."/>
            <person name="Suzuki Y."/>
            <person name="Nishikawa T."/>
            <person name="Otsuki T."/>
            <person name="Sugiyama T."/>
            <person name="Irie R."/>
            <person name="Wakamatsu A."/>
            <person name="Hayashi K."/>
            <person name="Sato H."/>
            <person name="Nagai K."/>
            <person name="Kimura K."/>
            <person name="Makita H."/>
            <person name="Sekine M."/>
            <person name="Obayashi M."/>
            <person name="Nishi T."/>
            <person name="Shibahara T."/>
            <person name="Tanaka T."/>
            <person name="Ishii S."/>
            <person name="Yamamoto J."/>
            <person name="Saito K."/>
            <person name="Kawai Y."/>
            <person name="Isono Y."/>
            <person name="Nakamura Y."/>
            <person name="Nagahari K."/>
            <person name="Murakami K."/>
            <person name="Yasuda T."/>
            <person name="Iwayanagi T."/>
            <person name="Wagatsuma M."/>
            <person name="Shiratori A."/>
            <person name="Sudo H."/>
            <person name="Hosoiri T."/>
            <person name="Kaku Y."/>
            <person name="Kodaira H."/>
            <person name="Kondo H."/>
            <person name="Sugawara M."/>
            <person name="Takahashi M."/>
            <person name="Kanda K."/>
            <person name="Yokoi T."/>
            <person name="Furuya T."/>
            <person name="Kikkawa E."/>
            <person name="Omura Y."/>
            <person name="Abe K."/>
            <person name="Kamihara K."/>
            <person name="Katsuta N."/>
            <person name="Sato K."/>
            <person name="Tanikawa M."/>
            <person name="Yamazaki M."/>
            <person name="Ninomiya K."/>
            <person name="Ishibashi T."/>
            <person name="Yamashita H."/>
            <person name="Murakawa K."/>
            <person name="Fujimori K."/>
            <person name="Tanai H."/>
            <person name="Kimata M."/>
            <person name="Watanabe M."/>
            <person name="Hiraoka S."/>
            <person name="Chiba Y."/>
            <person name="Ishida S."/>
            <person name="Ono Y."/>
            <person name="Takiguchi S."/>
            <person name="Watanabe S."/>
            <person name="Yosida M."/>
            <person name="Hotuta T."/>
            <person name="Kusano J."/>
            <person name="Kanehori K."/>
            <person name="Takahashi-Fujii A."/>
            <person name="Hara H."/>
            <person name="Tanase T.-O."/>
            <person name="Nomura Y."/>
            <person name="Togiya S."/>
            <person name="Komai F."/>
            <person name="Hara R."/>
            <person name="Takeuchi K."/>
            <person name="Arita M."/>
            <person name="Imose N."/>
            <person name="Musashino K."/>
            <person name="Yuuki H."/>
            <person name="Oshima A."/>
            <person name="Sasaki N."/>
            <person name="Aotsuka S."/>
            <person name="Yoshikawa Y."/>
            <person name="Matsunawa H."/>
            <person name="Ichihara T."/>
            <person name="Shiohata N."/>
            <person name="Sano S."/>
            <person name="Moriya S."/>
            <person name="Momiyama H."/>
            <person name="Satoh N."/>
            <person name="Takami S."/>
            <person name="Terashima Y."/>
            <person name="Suzuki O."/>
            <person name="Nakagawa S."/>
            <person name="Senoh A."/>
            <person name="Mizoguchi H."/>
            <person name="Goto Y."/>
            <person name="Shimizu F."/>
            <person name="Wakebe H."/>
            <person name="Hishigaki H."/>
            <person name="Watanabe T."/>
            <person name="Sugiyama A."/>
            <person name="Takemoto M."/>
            <person name="Kawakami B."/>
            <person name="Yamazaki M."/>
            <person name="Watanabe K."/>
            <person name="Kumagai A."/>
            <person name="Itakura S."/>
            <person name="Fukuzumi Y."/>
            <person name="Fujimori Y."/>
            <person name="Komiyama M."/>
            <person name="Tashiro H."/>
            <person name="Tanigami A."/>
            <person name="Fujiwara T."/>
            <person name="Ono T."/>
            <person name="Yamada K."/>
            <person name="Fujii Y."/>
            <person name="Ozaki K."/>
            <person name="Hirao M."/>
            <person name="Ohmori Y."/>
            <person name="Kawabata A."/>
            <person name="Hikiji T."/>
            <person name="Kobatake N."/>
            <person name="Inagaki H."/>
            <person name="Ikema Y."/>
            <person name="Okamoto S."/>
            <person name="Okitani R."/>
            <person name="Kawakami T."/>
            <person name="Noguchi S."/>
            <person name="Itoh T."/>
            <person name="Shigeta K."/>
            <person name="Senba T."/>
            <person name="Matsumura K."/>
            <person name="Nakajima Y."/>
            <person name="Mizuno T."/>
            <person name="Morinaga M."/>
            <person name="Sasaki M."/>
            <person name="Togashi T."/>
            <person name="Oyama M."/>
            <person name="Hata H."/>
            <person name="Watanabe M."/>
            <person name="Komatsu T."/>
            <person name="Mizushima-Sugano J."/>
            <person name="Satoh T."/>
            <person name="Shirai Y."/>
            <person name="Takahashi Y."/>
            <person name="Nakagawa K."/>
            <person name="Okumura K."/>
            <person name="Nagase T."/>
            <person name="Nomura N."/>
            <person name="Kikuchi H."/>
            <person name="Masuho Y."/>
            <person name="Yamashita R."/>
            <person name="Nakai K."/>
            <person name="Yada T."/>
            <person name="Nakamura Y."/>
            <person name="Ohara O."/>
            <person name="Isogai T."/>
            <person name="Sugano S."/>
        </authorList>
    </citation>
    <scope>NUCLEOTIDE SEQUENCE [LARGE SCALE MRNA]</scope>
    <source>
        <tissue>Teratocarcinoma</tissue>
    </source>
</reference>
<reference key="2">
    <citation type="journal article" date="2004" name="Genome Res.">
        <title>The status, quality, and expansion of the NIH full-length cDNA project: the Mammalian Gene Collection (MGC).</title>
        <authorList>
            <consortium name="The MGC Project Team"/>
        </authorList>
    </citation>
    <scope>NUCLEOTIDE SEQUENCE [LARGE SCALE MRNA]</scope>
    <source>
        <tissue>Eye</tissue>
        <tissue>PNS</tissue>
    </source>
</reference>
<reference key="3">
    <citation type="journal article" date="2017" name="Nat. Struct. Mol. Biol.">
        <title>Site-specific mapping of the human SUMO proteome reveals co-modification with phosphorylation.</title>
        <authorList>
            <person name="Hendriks I.A."/>
            <person name="Lyon D."/>
            <person name="Young C."/>
            <person name="Jensen L.J."/>
            <person name="Vertegaal A.C."/>
            <person name="Nielsen M.L."/>
        </authorList>
    </citation>
    <scope>SUMOYLATION [LARGE SCALE ANALYSIS] AT LYS-178</scope>
    <scope>IDENTIFICATION BY MASS SPECTROMETRY [LARGE SCALE ANALYSIS]</scope>
</reference>
<name>ZN554_HUMAN</name>